<name>CMPB_SYNE7</name>
<accession>Q55106</accession>
<accession>Q31N50</accession>
<protein>
    <recommendedName>
        <fullName>Bicarbonate transport system permease protein CmpB</fullName>
    </recommendedName>
</protein>
<feature type="chain" id="PRO_0000341960" description="Bicarbonate transport system permease protein CmpB">
    <location>
        <begin position="1"/>
        <end position="278"/>
    </location>
</feature>
<feature type="transmembrane region" description="Helical" evidence="1">
    <location>
        <begin position="24"/>
        <end position="44"/>
    </location>
</feature>
<feature type="transmembrane region" description="Helical" evidence="1">
    <location>
        <begin position="93"/>
        <end position="113"/>
    </location>
</feature>
<feature type="transmembrane region" description="Helical" evidence="1">
    <location>
        <begin position="124"/>
        <end position="144"/>
    </location>
</feature>
<feature type="transmembrane region" description="Helical" evidence="1">
    <location>
        <begin position="151"/>
        <end position="171"/>
    </location>
</feature>
<feature type="transmembrane region" description="Helical" evidence="1">
    <location>
        <begin position="196"/>
        <end position="216"/>
    </location>
</feature>
<feature type="transmembrane region" description="Helical" evidence="1">
    <location>
        <begin position="217"/>
        <end position="237"/>
    </location>
</feature>
<feature type="transmembrane region" description="Helical" evidence="1">
    <location>
        <begin position="249"/>
        <end position="269"/>
    </location>
</feature>
<feature type="domain" description="ABC transmembrane type-1" evidence="1">
    <location>
        <begin position="86"/>
        <end position="267"/>
    </location>
</feature>
<sequence>MVTARETRRNGSRPSGLKKWRQKLDGILLPLAGILGFLIIWQIFSSSGATRLPGPLSLFTEERTRELLLYPFLDRGGLDKGLFWQTIASLTRVAQGFSIAAIIGISVGILVGLNRQLNAMLDPLFQFLRMIAPLAWVPIALVAFQQNQPAAIFVIFITAVWPILINTAEGVRQIPQDYNNVARVLRMSKSKYLMKVVLPAALPYIFTGLRIAIGLSWLAIIAAEIVMSGIVGIGFFIWDAYQQNYVSDIILAVIYIGAVGLLLDRFVAWLQRWILRNM</sequence>
<dbReference type="EMBL" id="D26358">
    <property type="protein sequence ID" value="BAA05387.1"/>
    <property type="molecule type" value="Genomic_DNA"/>
</dbReference>
<dbReference type="EMBL" id="CP000100">
    <property type="protein sequence ID" value="ABB57519.1"/>
    <property type="molecule type" value="Genomic_DNA"/>
</dbReference>
<dbReference type="SMR" id="Q55106"/>
<dbReference type="STRING" id="1140.Synpcc7942_1489"/>
<dbReference type="TCDB" id="3.A.1.16.3">
    <property type="family name" value="the atp-binding cassette (abc) superfamily"/>
</dbReference>
<dbReference type="PaxDb" id="1140-Synpcc7942_1489"/>
<dbReference type="KEGG" id="syf:Synpcc7942_1489"/>
<dbReference type="eggNOG" id="COG0600">
    <property type="taxonomic scope" value="Bacteria"/>
</dbReference>
<dbReference type="HOGENOM" id="CLU_046113_1_1_3"/>
<dbReference type="OrthoDB" id="9804353at2"/>
<dbReference type="Proteomes" id="UP000889800">
    <property type="component" value="Chromosome"/>
</dbReference>
<dbReference type="GO" id="GO:0005886">
    <property type="term" value="C:plasma membrane"/>
    <property type="evidence" value="ECO:0007669"/>
    <property type="project" value="UniProtKB-SubCell"/>
</dbReference>
<dbReference type="GO" id="GO:0015112">
    <property type="term" value="F:nitrate transmembrane transporter activity"/>
    <property type="evidence" value="ECO:0007669"/>
    <property type="project" value="InterPro"/>
</dbReference>
<dbReference type="GO" id="GO:0006811">
    <property type="term" value="P:monoatomic ion transport"/>
    <property type="evidence" value="ECO:0007669"/>
    <property type="project" value="UniProtKB-KW"/>
</dbReference>
<dbReference type="CDD" id="cd06261">
    <property type="entry name" value="TM_PBP2"/>
    <property type="match status" value="1"/>
</dbReference>
<dbReference type="FunFam" id="1.10.3720.10:FF:000003">
    <property type="entry name" value="Aliphatic sulfonate ABC transporter permease"/>
    <property type="match status" value="1"/>
</dbReference>
<dbReference type="Gene3D" id="1.10.3720.10">
    <property type="entry name" value="MetI-like"/>
    <property type="match status" value="1"/>
</dbReference>
<dbReference type="InterPro" id="IPR000515">
    <property type="entry name" value="MetI-like"/>
</dbReference>
<dbReference type="InterPro" id="IPR035906">
    <property type="entry name" value="MetI-like_sf"/>
</dbReference>
<dbReference type="InterPro" id="IPR005889">
    <property type="entry name" value="NtrB"/>
</dbReference>
<dbReference type="NCBIfam" id="TIGR01183">
    <property type="entry name" value="ntrB"/>
    <property type="match status" value="1"/>
</dbReference>
<dbReference type="PANTHER" id="PTHR30151">
    <property type="entry name" value="ALKANE SULFONATE ABC TRANSPORTER-RELATED, MEMBRANE SUBUNIT"/>
    <property type="match status" value="1"/>
</dbReference>
<dbReference type="PANTHER" id="PTHR30151:SF7">
    <property type="entry name" value="NITRATE IMPORT PERMEASE PROTEIN NRTB"/>
    <property type="match status" value="1"/>
</dbReference>
<dbReference type="Pfam" id="PF00528">
    <property type="entry name" value="BPD_transp_1"/>
    <property type="match status" value="1"/>
</dbReference>
<dbReference type="SUPFAM" id="SSF161098">
    <property type="entry name" value="MetI-like"/>
    <property type="match status" value="1"/>
</dbReference>
<dbReference type="PROSITE" id="PS50928">
    <property type="entry name" value="ABC_TM1"/>
    <property type="match status" value="1"/>
</dbReference>
<reference key="1">
    <citation type="submission" date="1993-12" db="EMBL/GenBank/DDBJ databases">
        <authorList>
            <person name="Omata T."/>
        </authorList>
    </citation>
    <scope>NUCLEOTIDE SEQUENCE [GENOMIC DNA]</scope>
</reference>
<reference key="2">
    <citation type="submission" date="2005-08" db="EMBL/GenBank/DDBJ databases">
        <title>Complete sequence of chromosome 1 of Synechococcus elongatus PCC 7942.</title>
        <authorList>
            <consortium name="US DOE Joint Genome Institute"/>
            <person name="Copeland A."/>
            <person name="Lucas S."/>
            <person name="Lapidus A."/>
            <person name="Barry K."/>
            <person name="Detter J.C."/>
            <person name="Glavina T."/>
            <person name="Hammon N."/>
            <person name="Israni S."/>
            <person name="Pitluck S."/>
            <person name="Schmutz J."/>
            <person name="Larimer F."/>
            <person name="Land M."/>
            <person name="Kyrpides N."/>
            <person name="Lykidis A."/>
            <person name="Golden S."/>
            <person name="Richardson P."/>
        </authorList>
    </citation>
    <scope>NUCLEOTIDE SEQUENCE [LARGE SCALE GENOMIC DNA]</scope>
    <source>
        <strain>ATCC 33912 / PCC 7942 / FACHB-805</strain>
    </source>
</reference>
<reference key="3">
    <citation type="journal article" date="1999" name="Proc. Natl. Acad. Sci. U.S.A.">
        <title>Identification of an ATP-binding cassette transporter involved in bicarbonate uptake in the cyanobacterium Synechococcus sp. strain PCC 7942.</title>
        <authorList>
            <person name="Omata T."/>
            <person name="Price G.D."/>
            <person name="Badger M.R."/>
            <person name="Okamura M."/>
            <person name="Gohta S."/>
            <person name="Ogawa T."/>
        </authorList>
    </citation>
    <scope>FUNCTION IN BICARBONATE TRANSPORT</scope>
    <scope>INDUCTION</scope>
</reference>
<reference key="4">
    <citation type="journal article" date="2001" name="J. Bacteriol.">
        <title>Involvement of a CbbR homolog in low CO2-induced activation of the bicarbonate transporter operon in cyanobacteria.</title>
        <authorList>
            <person name="Omata T."/>
            <person name="Gohta S."/>
            <person name="Takahashi Y."/>
            <person name="Harano Y."/>
            <person name="Maeda S."/>
        </authorList>
    </citation>
    <scope>REGULATION BY CMPR</scope>
</reference>
<organism>
    <name type="scientific">Synechococcus elongatus (strain ATCC 33912 / PCC 7942 / FACHB-805)</name>
    <name type="common">Anacystis nidulans R2</name>
    <dbReference type="NCBI Taxonomy" id="1140"/>
    <lineage>
        <taxon>Bacteria</taxon>
        <taxon>Bacillati</taxon>
        <taxon>Cyanobacteriota</taxon>
        <taxon>Cyanophyceae</taxon>
        <taxon>Synechococcales</taxon>
        <taxon>Synechococcaceae</taxon>
        <taxon>Synechococcus</taxon>
    </lineage>
</organism>
<proteinExistence type="evidence at protein level"/>
<keyword id="KW-0997">Cell inner membrane</keyword>
<keyword id="KW-1003">Cell membrane</keyword>
<keyword id="KW-0406">Ion transport</keyword>
<keyword id="KW-0472">Membrane</keyword>
<keyword id="KW-1185">Reference proteome</keyword>
<keyword id="KW-0812">Transmembrane</keyword>
<keyword id="KW-1133">Transmembrane helix</keyword>
<keyword id="KW-0813">Transport</keyword>
<comment type="function">
    <text evidence="4">Part of the ABC transporter complex CmpABCD involved in bicarbonate transport. Probably responsible for the translocation of the substrate across the membrane (Probable).</text>
</comment>
<comment type="subunit">
    <text evidence="3">The complex is composed of two ATP-binding proteins (CmpC and CmpD), a transmembrane protein (CmpB) and a solute-binding protein (CmpA).</text>
</comment>
<comment type="subcellular location">
    <subcellularLocation>
        <location evidence="3">Cell inner membrane</location>
        <topology evidence="1">Multi-pass membrane protein</topology>
    </subcellularLocation>
</comment>
<comment type="induction">
    <text evidence="2">By carbon dioxide-limited conditions, probably via CmpR.</text>
</comment>
<comment type="similarity">
    <text evidence="3">Belongs to the binding-protein-dependent transport system permease family.</text>
</comment>
<gene>
    <name type="primary">cmpB</name>
    <name type="ordered locus">Synpcc7942_1489</name>
</gene>
<evidence type="ECO:0000255" key="1">
    <source>
        <dbReference type="PROSITE-ProRule" id="PRU00441"/>
    </source>
</evidence>
<evidence type="ECO:0000269" key="2">
    <source>
    </source>
</evidence>
<evidence type="ECO:0000305" key="3"/>
<evidence type="ECO:0000305" key="4">
    <source>
    </source>
</evidence>